<dbReference type="EC" id="4.3.2.10"/>
<dbReference type="EMBL" id="AE003849">
    <property type="protein sequence ID" value="AAF85013.1"/>
    <property type="molecule type" value="Genomic_DNA"/>
</dbReference>
<dbReference type="PIR" id="A82585">
    <property type="entry name" value="A82585"/>
</dbReference>
<dbReference type="RefSeq" id="WP_010894662.1">
    <property type="nucleotide sequence ID" value="NC_002488.3"/>
</dbReference>
<dbReference type="SMR" id="Q9PBD0"/>
<dbReference type="STRING" id="160492.XF_2214"/>
<dbReference type="KEGG" id="xfa:XF_2214"/>
<dbReference type="PATRIC" id="fig|160492.11.peg.2356"/>
<dbReference type="eggNOG" id="COG0107">
    <property type="taxonomic scope" value="Bacteria"/>
</dbReference>
<dbReference type="HOGENOM" id="CLU_048577_4_0_6"/>
<dbReference type="UniPathway" id="UPA00031">
    <property type="reaction ID" value="UER00010"/>
</dbReference>
<dbReference type="Proteomes" id="UP000000812">
    <property type="component" value="Chromosome"/>
</dbReference>
<dbReference type="GO" id="GO:0005737">
    <property type="term" value="C:cytoplasm"/>
    <property type="evidence" value="ECO:0007669"/>
    <property type="project" value="UniProtKB-SubCell"/>
</dbReference>
<dbReference type="GO" id="GO:0000107">
    <property type="term" value="F:imidazoleglycerol-phosphate synthase activity"/>
    <property type="evidence" value="ECO:0007669"/>
    <property type="project" value="UniProtKB-UniRule"/>
</dbReference>
<dbReference type="GO" id="GO:0016829">
    <property type="term" value="F:lyase activity"/>
    <property type="evidence" value="ECO:0007669"/>
    <property type="project" value="UniProtKB-KW"/>
</dbReference>
<dbReference type="GO" id="GO:0000105">
    <property type="term" value="P:L-histidine biosynthetic process"/>
    <property type="evidence" value="ECO:0007669"/>
    <property type="project" value="UniProtKB-UniRule"/>
</dbReference>
<dbReference type="CDD" id="cd04731">
    <property type="entry name" value="HisF"/>
    <property type="match status" value="1"/>
</dbReference>
<dbReference type="FunFam" id="3.20.20.70:FF:000006">
    <property type="entry name" value="Imidazole glycerol phosphate synthase subunit HisF"/>
    <property type="match status" value="1"/>
</dbReference>
<dbReference type="Gene3D" id="3.20.20.70">
    <property type="entry name" value="Aldolase class I"/>
    <property type="match status" value="1"/>
</dbReference>
<dbReference type="HAMAP" id="MF_01013">
    <property type="entry name" value="HisF"/>
    <property type="match status" value="1"/>
</dbReference>
<dbReference type="InterPro" id="IPR013785">
    <property type="entry name" value="Aldolase_TIM"/>
</dbReference>
<dbReference type="InterPro" id="IPR006062">
    <property type="entry name" value="His_biosynth"/>
</dbReference>
<dbReference type="InterPro" id="IPR004651">
    <property type="entry name" value="HisF"/>
</dbReference>
<dbReference type="InterPro" id="IPR050064">
    <property type="entry name" value="IGPS_HisA/HisF"/>
</dbReference>
<dbReference type="InterPro" id="IPR011060">
    <property type="entry name" value="RibuloseP-bd_barrel"/>
</dbReference>
<dbReference type="NCBIfam" id="TIGR00735">
    <property type="entry name" value="hisF"/>
    <property type="match status" value="1"/>
</dbReference>
<dbReference type="PANTHER" id="PTHR21235:SF2">
    <property type="entry name" value="IMIDAZOLE GLYCEROL PHOSPHATE SYNTHASE HISHF"/>
    <property type="match status" value="1"/>
</dbReference>
<dbReference type="PANTHER" id="PTHR21235">
    <property type="entry name" value="IMIDAZOLE GLYCEROL PHOSPHATE SYNTHASE SUBUNIT HISF/H IGP SYNTHASE SUBUNIT HISF/H"/>
    <property type="match status" value="1"/>
</dbReference>
<dbReference type="Pfam" id="PF00977">
    <property type="entry name" value="His_biosynth"/>
    <property type="match status" value="1"/>
</dbReference>
<dbReference type="SUPFAM" id="SSF51366">
    <property type="entry name" value="Ribulose-phoshate binding barrel"/>
    <property type="match status" value="1"/>
</dbReference>
<reference key="1">
    <citation type="journal article" date="2000" name="Nature">
        <title>The genome sequence of the plant pathogen Xylella fastidiosa.</title>
        <authorList>
            <person name="Simpson A.J.G."/>
            <person name="Reinach F.C."/>
            <person name="Arruda P."/>
            <person name="Abreu F.A."/>
            <person name="Acencio M."/>
            <person name="Alvarenga R."/>
            <person name="Alves L.M.C."/>
            <person name="Araya J.E."/>
            <person name="Baia G.S."/>
            <person name="Baptista C.S."/>
            <person name="Barros M.H."/>
            <person name="Bonaccorsi E.D."/>
            <person name="Bordin S."/>
            <person name="Bove J.M."/>
            <person name="Briones M.R.S."/>
            <person name="Bueno M.R.P."/>
            <person name="Camargo A.A."/>
            <person name="Camargo L.E.A."/>
            <person name="Carraro D.M."/>
            <person name="Carrer H."/>
            <person name="Colauto N.B."/>
            <person name="Colombo C."/>
            <person name="Costa F.F."/>
            <person name="Costa M.C.R."/>
            <person name="Costa-Neto C.M."/>
            <person name="Coutinho L.L."/>
            <person name="Cristofani M."/>
            <person name="Dias-Neto E."/>
            <person name="Docena C."/>
            <person name="El-Dorry H."/>
            <person name="Facincani A.P."/>
            <person name="Ferreira A.J.S."/>
            <person name="Ferreira V.C.A."/>
            <person name="Ferro J.A."/>
            <person name="Fraga J.S."/>
            <person name="Franca S.C."/>
            <person name="Franco M.C."/>
            <person name="Frohme M."/>
            <person name="Furlan L.R."/>
            <person name="Garnier M."/>
            <person name="Goldman G.H."/>
            <person name="Goldman M.H.S."/>
            <person name="Gomes S.L."/>
            <person name="Gruber A."/>
            <person name="Ho P.L."/>
            <person name="Hoheisel J.D."/>
            <person name="Junqueira M.L."/>
            <person name="Kemper E.L."/>
            <person name="Kitajima J.P."/>
            <person name="Krieger J.E."/>
            <person name="Kuramae E.E."/>
            <person name="Laigret F."/>
            <person name="Lambais M.R."/>
            <person name="Leite L.C.C."/>
            <person name="Lemos E.G.M."/>
            <person name="Lemos M.V.F."/>
            <person name="Lopes S.A."/>
            <person name="Lopes C.R."/>
            <person name="Machado J.A."/>
            <person name="Machado M.A."/>
            <person name="Madeira A.M.B.N."/>
            <person name="Madeira H.M.F."/>
            <person name="Marino C.L."/>
            <person name="Marques M.V."/>
            <person name="Martins E.A.L."/>
            <person name="Martins E.M.F."/>
            <person name="Matsukuma A.Y."/>
            <person name="Menck C.F.M."/>
            <person name="Miracca E.C."/>
            <person name="Miyaki C.Y."/>
            <person name="Monteiro-Vitorello C.B."/>
            <person name="Moon D.H."/>
            <person name="Nagai M.A."/>
            <person name="Nascimento A.L.T.O."/>
            <person name="Netto L.E.S."/>
            <person name="Nhani A. Jr."/>
            <person name="Nobrega F.G."/>
            <person name="Nunes L.R."/>
            <person name="Oliveira M.A."/>
            <person name="de Oliveira M.C."/>
            <person name="de Oliveira R.C."/>
            <person name="Palmieri D.A."/>
            <person name="Paris A."/>
            <person name="Peixoto B.R."/>
            <person name="Pereira G.A.G."/>
            <person name="Pereira H.A. Jr."/>
            <person name="Pesquero J.B."/>
            <person name="Quaggio R.B."/>
            <person name="Roberto P.G."/>
            <person name="Rodrigues V."/>
            <person name="de Rosa A.J.M."/>
            <person name="de Rosa V.E. Jr."/>
            <person name="de Sa R.G."/>
            <person name="Santelli R.V."/>
            <person name="Sawasaki H.E."/>
            <person name="da Silva A.C.R."/>
            <person name="da Silva A.M."/>
            <person name="da Silva F.R."/>
            <person name="Silva W.A. Jr."/>
            <person name="da Silveira J.F."/>
            <person name="Silvestri M.L.Z."/>
            <person name="Siqueira W.J."/>
            <person name="de Souza A.A."/>
            <person name="de Souza A.P."/>
            <person name="Terenzi M.F."/>
            <person name="Truffi D."/>
            <person name="Tsai S.M."/>
            <person name="Tsuhako M.H."/>
            <person name="Vallada H."/>
            <person name="Van Sluys M.A."/>
            <person name="Verjovski-Almeida S."/>
            <person name="Vettore A.L."/>
            <person name="Zago M.A."/>
            <person name="Zatz M."/>
            <person name="Meidanis J."/>
            <person name="Setubal J.C."/>
        </authorList>
    </citation>
    <scope>NUCLEOTIDE SEQUENCE [LARGE SCALE GENOMIC DNA]</scope>
    <source>
        <strain>9a5c</strain>
    </source>
</reference>
<comment type="function">
    <text evidence="1">IGPS catalyzes the conversion of PRFAR and glutamine to IGP, AICAR and glutamate. The HisF subunit catalyzes the cyclization activity that produces IGP and AICAR from PRFAR using the ammonia provided by the HisH subunit (By similarity).</text>
</comment>
<comment type="catalytic activity">
    <reaction>
        <text>5-[(5-phospho-1-deoxy-D-ribulos-1-ylimino)methylamino]-1-(5-phospho-beta-D-ribosyl)imidazole-4-carboxamide + L-glutamine = D-erythro-1-(imidazol-4-yl)glycerol 3-phosphate + 5-amino-1-(5-phospho-beta-D-ribosyl)imidazole-4-carboxamide + L-glutamate + H(+)</text>
        <dbReference type="Rhea" id="RHEA:24793"/>
        <dbReference type="ChEBI" id="CHEBI:15378"/>
        <dbReference type="ChEBI" id="CHEBI:29985"/>
        <dbReference type="ChEBI" id="CHEBI:58278"/>
        <dbReference type="ChEBI" id="CHEBI:58359"/>
        <dbReference type="ChEBI" id="CHEBI:58475"/>
        <dbReference type="ChEBI" id="CHEBI:58525"/>
        <dbReference type="EC" id="4.3.2.10"/>
    </reaction>
</comment>
<comment type="pathway">
    <text>Amino-acid biosynthesis; L-histidine biosynthesis; L-histidine from 5-phospho-alpha-D-ribose 1-diphosphate: step 5/9.</text>
</comment>
<comment type="subunit">
    <text evidence="1">Heterodimer of HisH and HisF.</text>
</comment>
<comment type="subcellular location">
    <subcellularLocation>
        <location evidence="1">Cytoplasm</location>
    </subcellularLocation>
</comment>
<comment type="similarity">
    <text evidence="3">Belongs to the HisA/HisF family.</text>
</comment>
<proteinExistence type="inferred from homology"/>
<sequence length="257" mass="27954">MLSRRLIPCLDVRDGRVVKGVKFRDHVDMGDIVELALRYRDHGADELVFYDIGASPRGRSVDYRWVERVARLIDIPFCVAGGIGQVETARAVLHAGADKISINSPALRQPALISALAEAFGVQCVVVGIDSIREADGQWRVRCNTGDPDKTQALPLRTLDWIVEAQRLGAGEIVLNCMDSDGVRCGYDIAQLSQARALCQVPLVASGGAGNMQHFADVFHKADVDGALAASVFHSGAILIPGLKQFLREQQIEVRDV</sequence>
<gene>
    <name type="primary">hisF</name>
    <name type="ordered locus">XF_2214</name>
</gene>
<accession>Q9PBD0</accession>
<protein>
    <recommendedName>
        <fullName>Imidazole glycerol phosphate synthase subunit HisF</fullName>
        <ecNumber>4.3.2.10</ecNumber>
    </recommendedName>
    <alternativeName>
        <fullName>IGP synthase cyclase subunit</fullName>
    </alternativeName>
    <alternativeName>
        <fullName>IGP synthase subunit HisF</fullName>
    </alternativeName>
    <alternativeName>
        <fullName>ImGP synthase subunit HisF</fullName>
        <shortName>IGPS subunit HisF</shortName>
    </alternativeName>
</protein>
<evidence type="ECO:0000250" key="1"/>
<evidence type="ECO:0000255" key="2"/>
<evidence type="ECO:0000305" key="3"/>
<feature type="chain" id="PRO_0000142270" description="Imidazole glycerol phosphate synthase subunit HisF">
    <location>
        <begin position="1"/>
        <end position="257"/>
    </location>
</feature>
<feature type="active site" evidence="2">
    <location>
        <position position="11"/>
    </location>
</feature>
<feature type="active site" evidence="2">
    <location>
        <position position="130"/>
    </location>
</feature>
<organism>
    <name type="scientific">Xylella fastidiosa (strain 9a5c)</name>
    <dbReference type="NCBI Taxonomy" id="160492"/>
    <lineage>
        <taxon>Bacteria</taxon>
        <taxon>Pseudomonadati</taxon>
        <taxon>Pseudomonadota</taxon>
        <taxon>Gammaproteobacteria</taxon>
        <taxon>Lysobacterales</taxon>
        <taxon>Lysobacteraceae</taxon>
        <taxon>Xylella</taxon>
    </lineage>
</organism>
<keyword id="KW-0028">Amino-acid biosynthesis</keyword>
<keyword id="KW-0963">Cytoplasm</keyword>
<keyword id="KW-0368">Histidine biosynthesis</keyword>
<keyword id="KW-0456">Lyase</keyword>
<name>HIS6_XYLFA</name>